<proteinExistence type="inferred from homology"/>
<evidence type="ECO:0000255" key="1">
    <source>
        <dbReference type="HAMAP-Rule" id="MF_01315"/>
    </source>
</evidence>
<evidence type="ECO:0000256" key="2">
    <source>
        <dbReference type="SAM" id="MobiDB-lite"/>
    </source>
</evidence>
<evidence type="ECO:0000305" key="3"/>
<dbReference type="EMBL" id="CP000023">
    <property type="protein sequence ID" value="AAV61508.1"/>
    <property type="molecule type" value="Genomic_DNA"/>
</dbReference>
<dbReference type="RefSeq" id="WP_002885820.1">
    <property type="nucleotide sequence ID" value="NC_006448.1"/>
</dbReference>
<dbReference type="SMR" id="Q5M2D7"/>
<dbReference type="STRING" id="264199.stu1910"/>
<dbReference type="GeneID" id="93793063"/>
<dbReference type="KEGG" id="stl:stu1910"/>
<dbReference type="eggNOG" id="COG0099">
    <property type="taxonomic scope" value="Bacteria"/>
</dbReference>
<dbReference type="HOGENOM" id="CLU_103849_1_1_9"/>
<dbReference type="Proteomes" id="UP000001170">
    <property type="component" value="Chromosome"/>
</dbReference>
<dbReference type="GO" id="GO:0005829">
    <property type="term" value="C:cytosol"/>
    <property type="evidence" value="ECO:0007669"/>
    <property type="project" value="TreeGrafter"/>
</dbReference>
<dbReference type="GO" id="GO:0015935">
    <property type="term" value="C:small ribosomal subunit"/>
    <property type="evidence" value="ECO:0007669"/>
    <property type="project" value="TreeGrafter"/>
</dbReference>
<dbReference type="GO" id="GO:0019843">
    <property type="term" value="F:rRNA binding"/>
    <property type="evidence" value="ECO:0007669"/>
    <property type="project" value="UniProtKB-UniRule"/>
</dbReference>
<dbReference type="GO" id="GO:0003735">
    <property type="term" value="F:structural constituent of ribosome"/>
    <property type="evidence" value="ECO:0007669"/>
    <property type="project" value="InterPro"/>
</dbReference>
<dbReference type="GO" id="GO:0000049">
    <property type="term" value="F:tRNA binding"/>
    <property type="evidence" value="ECO:0007669"/>
    <property type="project" value="UniProtKB-UniRule"/>
</dbReference>
<dbReference type="GO" id="GO:0006412">
    <property type="term" value="P:translation"/>
    <property type="evidence" value="ECO:0007669"/>
    <property type="project" value="UniProtKB-UniRule"/>
</dbReference>
<dbReference type="FunFam" id="1.10.8.50:FF:000001">
    <property type="entry name" value="30S ribosomal protein S13"/>
    <property type="match status" value="1"/>
</dbReference>
<dbReference type="FunFam" id="4.10.910.10:FF:000001">
    <property type="entry name" value="30S ribosomal protein S13"/>
    <property type="match status" value="1"/>
</dbReference>
<dbReference type="Gene3D" id="1.10.8.50">
    <property type="match status" value="1"/>
</dbReference>
<dbReference type="Gene3D" id="4.10.910.10">
    <property type="entry name" value="30s ribosomal protein s13, domain 2"/>
    <property type="match status" value="1"/>
</dbReference>
<dbReference type="HAMAP" id="MF_01315">
    <property type="entry name" value="Ribosomal_uS13"/>
    <property type="match status" value="1"/>
</dbReference>
<dbReference type="InterPro" id="IPR027437">
    <property type="entry name" value="Rbsml_uS13_C"/>
</dbReference>
<dbReference type="InterPro" id="IPR001892">
    <property type="entry name" value="Ribosomal_uS13"/>
</dbReference>
<dbReference type="InterPro" id="IPR010979">
    <property type="entry name" value="Ribosomal_uS13-like_H2TH"/>
</dbReference>
<dbReference type="InterPro" id="IPR019980">
    <property type="entry name" value="Ribosomal_uS13_bac-type"/>
</dbReference>
<dbReference type="InterPro" id="IPR018269">
    <property type="entry name" value="Ribosomal_uS13_CS"/>
</dbReference>
<dbReference type="NCBIfam" id="TIGR03631">
    <property type="entry name" value="uS13_bact"/>
    <property type="match status" value="1"/>
</dbReference>
<dbReference type="PANTHER" id="PTHR10871">
    <property type="entry name" value="30S RIBOSOMAL PROTEIN S13/40S RIBOSOMAL PROTEIN S18"/>
    <property type="match status" value="1"/>
</dbReference>
<dbReference type="PANTHER" id="PTHR10871:SF1">
    <property type="entry name" value="SMALL RIBOSOMAL SUBUNIT PROTEIN US13M"/>
    <property type="match status" value="1"/>
</dbReference>
<dbReference type="Pfam" id="PF00416">
    <property type="entry name" value="Ribosomal_S13"/>
    <property type="match status" value="1"/>
</dbReference>
<dbReference type="PIRSF" id="PIRSF002134">
    <property type="entry name" value="Ribosomal_S13"/>
    <property type="match status" value="1"/>
</dbReference>
<dbReference type="SUPFAM" id="SSF46946">
    <property type="entry name" value="S13-like H2TH domain"/>
    <property type="match status" value="1"/>
</dbReference>
<dbReference type="PROSITE" id="PS00646">
    <property type="entry name" value="RIBOSOMAL_S13_1"/>
    <property type="match status" value="1"/>
</dbReference>
<dbReference type="PROSITE" id="PS50159">
    <property type="entry name" value="RIBOSOMAL_S13_2"/>
    <property type="match status" value="1"/>
</dbReference>
<name>RS13_STRT2</name>
<protein>
    <recommendedName>
        <fullName evidence="1">Small ribosomal subunit protein uS13</fullName>
    </recommendedName>
    <alternativeName>
        <fullName evidence="3">30S ribosomal protein S13</fullName>
    </alternativeName>
</protein>
<feature type="chain" id="PRO_0000230570" description="Small ribosomal subunit protein uS13">
    <location>
        <begin position="1"/>
        <end position="121"/>
    </location>
</feature>
<feature type="region of interest" description="Disordered" evidence="2">
    <location>
        <begin position="95"/>
        <end position="121"/>
    </location>
</feature>
<feature type="compositionally biased region" description="Basic residues" evidence="2">
    <location>
        <begin position="106"/>
        <end position="121"/>
    </location>
</feature>
<reference key="1">
    <citation type="journal article" date="2004" name="Nat. Biotechnol.">
        <title>Complete sequence and comparative genome analysis of the dairy bacterium Streptococcus thermophilus.</title>
        <authorList>
            <person name="Bolotin A."/>
            <person name="Quinquis B."/>
            <person name="Renault P."/>
            <person name="Sorokin A."/>
            <person name="Ehrlich S.D."/>
            <person name="Kulakauskas S."/>
            <person name="Lapidus A."/>
            <person name="Goltsman E."/>
            <person name="Mazur M."/>
            <person name="Pusch G.D."/>
            <person name="Fonstein M."/>
            <person name="Overbeek R."/>
            <person name="Kyprides N."/>
            <person name="Purnelle B."/>
            <person name="Prozzi D."/>
            <person name="Ngui K."/>
            <person name="Masuy D."/>
            <person name="Hancy F."/>
            <person name="Burteau S."/>
            <person name="Boutry M."/>
            <person name="Delcour J."/>
            <person name="Goffeau A."/>
            <person name="Hols P."/>
        </authorList>
    </citation>
    <scope>NUCLEOTIDE SEQUENCE [LARGE SCALE GENOMIC DNA]</scope>
    <source>
        <strain>ATCC BAA-250 / LMG 18311</strain>
    </source>
</reference>
<gene>
    <name evidence="1" type="primary">rpsM</name>
    <name type="ordered locus">stu1910</name>
</gene>
<organism>
    <name type="scientific">Streptococcus thermophilus (strain ATCC BAA-250 / LMG 18311)</name>
    <dbReference type="NCBI Taxonomy" id="264199"/>
    <lineage>
        <taxon>Bacteria</taxon>
        <taxon>Bacillati</taxon>
        <taxon>Bacillota</taxon>
        <taxon>Bacilli</taxon>
        <taxon>Lactobacillales</taxon>
        <taxon>Streptococcaceae</taxon>
        <taxon>Streptococcus</taxon>
    </lineage>
</organism>
<sequence length="121" mass="13421">MARIAGVDIPNDKRVVISLTYVYGIGLATSKKILAAAGVSEDIRVKDLTNDQEDAIRREVDAIKVEGDLRREVNLNIKRLMEIGSYRGIRHRRGLPVRGQNTKNNARTRKGKAVAIAGKKK</sequence>
<comment type="function">
    <text evidence="1">Located at the top of the head of the 30S subunit, it contacts several helices of the 16S rRNA. In the 70S ribosome it contacts the 23S rRNA (bridge B1a) and protein L5 of the 50S subunit (bridge B1b), connecting the 2 subunits; these bridges are implicated in subunit movement. Contacts the tRNAs in the A and P-sites.</text>
</comment>
<comment type="subunit">
    <text evidence="1">Part of the 30S ribosomal subunit. Forms a loose heterodimer with protein S19. Forms two bridges to the 50S subunit in the 70S ribosome.</text>
</comment>
<comment type="similarity">
    <text evidence="1">Belongs to the universal ribosomal protein uS13 family.</text>
</comment>
<keyword id="KW-1185">Reference proteome</keyword>
<keyword id="KW-0687">Ribonucleoprotein</keyword>
<keyword id="KW-0689">Ribosomal protein</keyword>
<keyword id="KW-0694">RNA-binding</keyword>
<keyword id="KW-0699">rRNA-binding</keyword>
<keyword id="KW-0820">tRNA-binding</keyword>
<accession>Q5M2D7</accession>